<reference key="1">
    <citation type="submission" date="2007-05" db="EMBL/GenBank/DDBJ databases">
        <title>Complete sequence of chromosome of Staphylococcus aureus subsp. aureus JH9.</title>
        <authorList>
            <consortium name="US DOE Joint Genome Institute"/>
            <person name="Copeland A."/>
            <person name="Lucas S."/>
            <person name="Lapidus A."/>
            <person name="Barry K."/>
            <person name="Detter J.C."/>
            <person name="Glavina del Rio T."/>
            <person name="Hammon N."/>
            <person name="Israni S."/>
            <person name="Pitluck S."/>
            <person name="Chain P."/>
            <person name="Malfatti S."/>
            <person name="Shin M."/>
            <person name="Vergez L."/>
            <person name="Schmutz J."/>
            <person name="Larimer F."/>
            <person name="Land M."/>
            <person name="Hauser L."/>
            <person name="Kyrpides N."/>
            <person name="Kim E."/>
            <person name="Tomasz A."/>
            <person name="Richardson P."/>
        </authorList>
    </citation>
    <scope>NUCLEOTIDE SEQUENCE [LARGE SCALE GENOMIC DNA]</scope>
    <source>
        <strain>JH9</strain>
    </source>
</reference>
<protein>
    <recommendedName>
        <fullName evidence="1">Large ribosomal subunit protein uL4</fullName>
    </recommendedName>
    <alternativeName>
        <fullName evidence="3">50S ribosomal protein L4</fullName>
    </alternativeName>
</protein>
<proteinExistence type="inferred from homology"/>
<gene>
    <name evidence="1" type="primary">rplD</name>
    <name type="ordered locus">SaurJH9_2276</name>
</gene>
<accession>A5IV33</accession>
<name>RL4_STAA9</name>
<evidence type="ECO:0000255" key="1">
    <source>
        <dbReference type="HAMAP-Rule" id="MF_01328"/>
    </source>
</evidence>
<evidence type="ECO:0000256" key="2">
    <source>
        <dbReference type="SAM" id="MobiDB-lite"/>
    </source>
</evidence>
<evidence type="ECO:0000305" key="3"/>
<sequence>MANYDVLKLDGTKSGSIELSDAVFGIEPNNSVLFEAINLQRASLRQGTHAVKNRSAVSGGGRKPWKQKGTGRARQGTIRAPQWRGGGIVFGPTPRSYAYKMPKKMRRLALRSALSFKAQENGLTVVDAFNFEAPKTKEFKNVLSTLEQPKKVLVVTENEDVNVELSARNIPGVQVTTAQGLNVLDITNADSLVITEAAAKKVEEVLG</sequence>
<organism>
    <name type="scientific">Staphylococcus aureus (strain JH9)</name>
    <dbReference type="NCBI Taxonomy" id="359786"/>
    <lineage>
        <taxon>Bacteria</taxon>
        <taxon>Bacillati</taxon>
        <taxon>Bacillota</taxon>
        <taxon>Bacilli</taxon>
        <taxon>Bacillales</taxon>
        <taxon>Staphylococcaceae</taxon>
        <taxon>Staphylococcus</taxon>
    </lineage>
</organism>
<keyword id="KW-0687">Ribonucleoprotein</keyword>
<keyword id="KW-0689">Ribosomal protein</keyword>
<keyword id="KW-0694">RNA-binding</keyword>
<keyword id="KW-0699">rRNA-binding</keyword>
<dbReference type="EMBL" id="CP000703">
    <property type="protein sequence ID" value="ABQ50056.1"/>
    <property type="molecule type" value="Genomic_DNA"/>
</dbReference>
<dbReference type="RefSeq" id="WP_000024827.1">
    <property type="nucleotide sequence ID" value="NC_009487.1"/>
</dbReference>
<dbReference type="SMR" id="A5IV33"/>
<dbReference type="KEGG" id="saj:SaurJH9_2276"/>
<dbReference type="HOGENOM" id="CLU_041575_5_2_9"/>
<dbReference type="GO" id="GO:1990904">
    <property type="term" value="C:ribonucleoprotein complex"/>
    <property type="evidence" value="ECO:0007669"/>
    <property type="project" value="UniProtKB-KW"/>
</dbReference>
<dbReference type="GO" id="GO:0005840">
    <property type="term" value="C:ribosome"/>
    <property type="evidence" value="ECO:0007669"/>
    <property type="project" value="UniProtKB-KW"/>
</dbReference>
<dbReference type="GO" id="GO:0019843">
    <property type="term" value="F:rRNA binding"/>
    <property type="evidence" value="ECO:0007669"/>
    <property type="project" value="UniProtKB-UniRule"/>
</dbReference>
<dbReference type="GO" id="GO:0003735">
    <property type="term" value="F:structural constituent of ribosome"/>
    <property type="evidence" value="ECO:0007669"/>
    <property type="project" value="InterPro"/>
</dbReference>
<dbReference type="GO" id="GO:0006412">
    <property type="term" value="P:translation"/>
    <property type="evidence" value="ECO:0007669"/>
    <property type="project" value="UniProtKB-UniRule"/>
</dbReference>
<dbReference type="FunFam" id="3.40.1370.10:FF:000003">
    <property type="entry name" value="50S ribosomal protein L4"/>
    <property type="match status" value="1"/>
</dbReference>
<dbReference type="Gene3D" id="3.40.1370.10">
    <property type="match status" value="1"/>
</dbReference>
<dbReference type="HAMAP" id="MF_01328_B">
    <property type="entry name" value="Ribosomal_uL4_B"/>
    <property type="match status" value="1"/>
</dbReference>
<dbReference type="InterPro" id="IPR002136">
    <property type="entry name" value="Ribosomal_uL4"/>
</dbReference>
<dbReference type="InterPro" id="IPR013005">
    <property type="entry name" value="Ribosomal_uL4-like"/>
</dbReference>
<dbReference type="InterPro" id="IPR023574">
    <property type="entry name" value="Ribosomal_uL4_dom_sf"/>
</dbReference>
<dbReference type="NCBIfam" id="TIGR03953">
    <property type="entry name" value="rplD_bact"/>
    <property type="match status" value="1"/>
</dbReference>
<dbReference type="PANTHER" id="PTHR10746">
    <property type="entry name" value="50S RIBOSOMAL PROTEIN L4"/>
    <property type="match status" value="1"/>
</dbReference>
<dbReference type="PANTHER" id="PTHR10746:SF6">
    <property type="entry name" value="LARGE RIBOSOMAL SUBUNIT PROTEIN UL4M"/>
    <property type="match status" value="1"/>
</dbReference>
<dbReference type="Pfam" id="PF00573">
    <property type="entry name" value="Ribosomal_L4"/>
    <property type="match status" value="1"/>
</dbReference>
<dbReference type="SUPFAM" id="SSF52166">
    <property type="entry name" value="Ribosomal protein L4"/>
    <property type="match status" value="1"/>
</dbReference>
<comment type="function">
    <text evidence="1">One of the primary rRNA binding proteins, this protein initially binds near the 5'-end of the 23S rRNA. It is important during the early stages of 50S assembly. It makes multiple contacts with different domains of the 23S rRNA in the assembled 50S subunit and ribosome.</text>
</comment>
<comment type="function">
    <text evidence="1">Forms part of the polypeptide exit tunnel.</text>
</comment>
<comment type="subunit">
    <text evidence="1">Part of the 50S ribosomal subunit.</text>
</comment>
<comment type="similarity">
    <text evidence="1">Belongs to the universal ribosomal protein uL4 family.</text>
</comment>
<feature type="chain" id="PRO_1000086540" description="Large ribosomal subunit protein uL4">
    <location>
        <begin position="1"/>
        <end position="207"/>
    </location>
</feature>
<feature type="region of interest" description="Disordered" evidence="2">
    <location>
        <begin position="50"/>
        <end position="76"/>
    </location>
</feature>